<organism>
    <name type="scientific">Neisseria meningitidis serogroup A / serotype 4A (strain DSM 15465 / Z2491)</name>
    <dbReference type="NCBI Taxonomy" id="122587"/>
    <lineage>
        <taxon>Bacteria</taxon>
        <taxon>Pseudomonadati</taxon>
        <taxon>Pseudomonadota</taxon>
        <taxon>Betaproteobacteria</taxon>
        <taxon>Neisseriales</taxon>
        <taxon>Neisseriaceae</taxon>
        <taxon>Neisseria</taxon>
    </lineage>
</organism>
<gene>
    <name evidence="1" type="primary">purC</name>
    <name type="ordered locus">NMA0968</name>
</gene>
<comment type="catalytic activity">
    <reaction evidence="1">
        <text>5-amino-1-(5-phospho-D-ribosyl)imidazole-4-carboxylate + L-aspartate + ATP = (2S)-2-[5-amino-1-(5-phospho-beta-D-ribosyl)imidazole-4-carboxamido]succinate + ADP + phosphate + 2 H(+)</text>
        <dbReference type="Rhea" id="RHEA:22628"/>
        <dbReference type="ChEBI" id="CHEBI:15378"/>
        <dbReference type="ChEBI" id="CHEBI:29991"/>
        <dbReference type="ChEBI" id="CHEBI:30616"/>
        <dbReference type="ChEBI" id="CHEBI:43474"/>
        <dbReference type="ChEBI" id="CHEBI:58443"/>
        <dbReference type="ChEBI" id="CHEBI:77657"/>
        <dbReference type="ChEBI" id="CHEBI:456216"/>
        <dbReference type="EC" id="6.3.2.6"/>
    </reaction>
</comment>
<comment type="pathway">
    <text evidence="1">Purine metabolism; IMP biosynthesis via de novo pathway; 5-amino-1-(5-phospho-D-ribosyl)imidazole-4-carboxamide from 5-amino-1-(5-phospho-D-ribosyl)imidazole-4-carboxylate: step 1/2.</text>
</comment>
<comment type="similarity">
    <text evidence="1">Belongs to the SAICAR synthetase family.</text>
</comment>
<accession>Q9JV73</accession>
<accession>A1IR08</accession>
<protein>
    <recommendedName>
        <fullName evidence="1">Phosphoribosylaminoimidazole-succinocarboxamide synthase</fullName>
        <ecNumber evidence="1">6.3.2.6</ecNumber>
    </recommendedName>
    <alternativeName>
        <fullName evidence="1">SAICAR synthetase</fullName>
    </alternativeName>
</protein>
<reference key="1">
    <citation type="journal article" date="2000" name="Nature">
        <title>Complete DNA sequence of a serogroup A strain of Neisseria meningitidis Z2491.</title>
        <authorList>
            <person name="Parkhill J."/>
            <person name="Achtman M."/>
            <person name="James K.D."/>
            <person name="Bentley S.D."/>
            <person name="Churcher C.M."/>
            <person name="Klee S.R."/>
            <person name="Morelli G."/>
            <person name="Basham D."/>
            <person name="Brown D."/>
            <person name="Chillingworth T."/>
            <person name="Davies R.M."/>
            <person name="Davis P."/>
            <person name="Devlin K."/>
            <person name="Feltwell T."/>
            <person name="Hamlin N."/>
            <person name="Holroyd S."/>
            <person name="Jagels K."/>
            <person name="Leather S."/>
            <person name="Moule S."/>
            <person name="Mungall K.L."/>
            <person name="Quail M.A."/>
            <person name="Rajandream M.A."/>
            <person name="Rutherford K.M."/>
            <person name="Simmonds M."/>
            <person name="Skelton J."/>
            <person name="Whitehead S."/>
            <person name="Spratt B.G."/>
            <person name="Barrell B.G."/>
        </authorList>
    </citation>
    <scope>NUCLEOTIDE SEQUENCE [LARGE SCALE GENOMIC DNA]</scope>
    <source>
        <strain>DSM 15465 / Z2491</strain>
    </source>
</reference>
<proteinExistence type="inferred from homology"/>
<dbReference type="EC" id="6.3.2.6" evidence="1"/>
<dbReference type="EMBL" id="AL157959">
    <property type="protein sequence ID" value="CAM08192.1"/>
    <property type="molecule type" value="Genomic_DNA"/>
</dbReference>
<dbReference type="PIR" id="G81943">
    <property type="entry name" value="G81943"/>
</dbReference>
<dbReference type="RefSeq" id="WP_002229244.1">
    <property type="nucleotide sequence ID" value="NC_003116.1"/>
</dbReference>
<dbReference type="SMR" id="Q9JV73"/>
<dbReference type="EnsemblBacteria" id="CAM08192">
    <property type="protein sequence ID" value="CAM08192"/>
    <property type="gene ID" value="NMA0968"/>
</dbReference>
<dbReference type="GeneID" id="93386414"/>
<dbReference type="KEGG" id="nma:NMA0968"/>
<dbReference type="HOGENOM" id="CLU_045637_0_0_4"/>
<dbReference type="UniPathway" id="UPA00074">
    <property type="reaction ID" value="UER00131"/>
</dbReference>
<dbReference type="Proteomes" id="UP000000626">
    <property type="component" value="Chromosome"/>
</dbReference>
<dbReference type="GO" id="GO:0005737">
    <property type="term" value="C:cytoplasm"/>
    <property type="evidence" value="ECO:0007669"/>
    <property type="project" value="TreeGrafter"/>
</dbReference>
<dbReference type="GO" id="GO:0005524">
    <property type="term" value="F:ATP binding"/>
    <property type="evidence" value="ECO:0007669"/>
    <property type="project" value="UniProtKB-KW"/>
</dbReference>
<dbReference type="GO" id="GO:0004639">
    <property type="term" value="F:phosphoribosylaminoimidazolesuccinocarboxamide synthase activity"/>
    <property type="evidence" value="ECO:0007669"/>
    <property type="project" value="UniProtKB-UniRule"/>
</dbReference>
<dbReference type="GO" id="GO:0006189">
    <property type="term" value="P:'de novo' IMP biosynthetic process"/>
    <property type="evidence" value="ECO:0007669"/>
    <property type="project" value="UniProtKB-UniRule"/>
</dbReference>
<dbReference type="CDD" id="cd01414">
    <property type="entry name" value="SAICAR_synt_Sc"/>
    <property type="match status" value="1"/>
</dbReference>
<dbReference type="FunFam" id="3.30.200.20:FF:000365">
    <property type="entry name" value="Phosphoribosylaminoimidazole-succinocarboxamide synthase"/>
    <property type="match status" value="1"/>
</dbReference>
<dbReference type="FunFam" id="3.30.470.20:FF:000015">
    <property type="entry name" value="Phosphoribosylaminoimidazole-succinocarboxamide synthase"/>
    <property type="match status" value="1"/>
</dbReference>
<dbReference type="Gene3D" id="3.30.470.20">
    <property type="entry name" value="ATP-grasp fold, B domain"/>
    <property type="match status" value="1"/>
</dbReference>
<dbReference type="Gene3D" id="3.30.200.20">
    <property type="entry name" value="Phosphorylase Kinase, domain 1"/>
    <property type="match status" value="1"/>
</dbReference>
<dbReference type="HAMAP" id="MF_00137">
    <property type="entry name" value="SAICAR_synth"/>
    <property type="match status" value="1"/>
</dbReference>
<dbReference type="InterPro" id="IPR028923">
    <property type="entry name" value="SAICAR_synt/ADE2_N"/>
</dbReference>
<dbReference type="InterPro" id="IPR001636">
    <property type="entry name" value="SAICAR_synth"/>
</dbReference>
<dbReference type="InterPro" id="IPR018236">
    <property type="entry name" value="SAICAR_synthetase_CS"/>
</dbReference>
<dbReference type="NCBIfam" id="NF010568">
    <property type="entry name" value="PRK13961.1"/>
    <property type="match status" value="1"/>
</dbReference>
<dbReference type="NCBIfam" id="TIGR00081">
    <property type="entry name" value="purC"/>
    <property type="match status" value="1"/>
</dbReference>
<dbReference type="PANTHER" id="PTHR43700">
    <property type="entry name" value="PHOSPHORIBOSYLAMINOIMIDAZOLE-SUCCINOCARBOXAMIDE SYNTHASE"/>
    <property type="match status" value="1"/>
</dbReference>
<dbReference type="PANTHER" id="PTHR43700:SF1">
    <property type="entry name" value="PHOSPHORIBOSYLAMINOIMIDAZOLE-SUCCINOCARBOXAMIDE SYNTHASE"/>
    <property type="match status" value="1"/>
</dbReference>
<dbReference type="Pfam" id="PF01259">
    <property type="entry name" value="SAICAR_synt"/>
    <property type="match status" value="1"/>
</dbReference>
<dbReference type="SUPFAM" id="SSF56104">
    <property type="entry name" value="SAICAR synthase-like"/>
    <property type="match status" value="1"/>
</dbReference>
<dbReference type="PROSITE" id="PS01057">
    <property type="entry name" value="SAICAR_SYNTHETASE_1"/>
    <property type="match status" value="1"/>
</dbReference>
<dbReference type="PROSITE" id="PS01058">
    <property type="entry name" value="SAICAR_SYNTHETASE_2"/>
    <property type="match status" value="1"/>
</dbReference>
<feature type="chain" id="PRO_0000100845" description="Phosphoribosylaminoimidazole-succinocarboxamide synthase">
    <location>
        <begin position="1"/>
        <end position="287"/>
    </location>
</feature>
<keyword id="KW-0067">ATP-binding</keyword>
<keyword id="KW-0436">Ligase</keyword>
<keyword id="KW-0547">Nucleotide-binding</keyword>
<keyword id="KW-0658">Purine biosynthesis</keyword>
<sequence length="287" mass="32252">MSEIGLVKIYSGKVRDLYEIDDKRMLMVASDRLSAFDVILDDPIPSKGEILTQISNFWFKKLAHIMPNHFTGQTVYDVLPENEAKVLEKRAVVAKKLTPVKVEAIVRGYLAGSGWKDYQKTGSVCGIRLPEGMQEAQQLPEVIFTPSTKAAVGDHDENISFEECGRIIGKELAEEVRAKAVRLYTEAAEYAKSRGIIICDTKFEFGLDTNGTLTLMDEVLTPDSSRFWPADQYEVGTNPPSFDKQFVRDWLEQSGWNKKAPAPKVPADVIQKTVEKYREALTLLTQD</sequence>
<evidence type="ECO:0000255" key="1">
    <source>
        <dbReference type="HAMAP-Rule" id="MF_00137"/>
    </source>
</evidence>
<name>PUR7_NEIMA</name>